<feature type="chain" id="PRO_0000073340" description="ATP synthase gamma chain">
    <location>
        <begin position="1"/>
        <end position="316"/>
    </location>
</feature>
<accession>Q7VA64</accession>
<evidence type="ECO:0000255" key="1">
    <source>
        <dbReference type="HAMAP-Rule" id="MF_00815"/>
    </source>
</evidence>
<keyword id="KW-0066">ATP synthesis</keyword>
<keyword id="KW-0139">CF(1)</keyword>
<keyword id="KW-0375">Hydrogen ion transport</keyword>
<keyword id="KW-0406">Ion transport</keyword>
<keyword id="KW-0472">Membrane</keyword>
<keyword id="KW-1185">Reference proteome</keyword>
<keyword id="KW-0793">Thylakoid</keyword>
<keyword id="KW-0813">Transport</keyword>
<dbReference type="EMBL" id="AE017126">
    <property type="protein sequence ID" value="AAQ00647.1"/>
    <property type="molecule type" value="Genomic_DNA"/>
</dbReference>
<dbReference type="RefSeq" id="NP_875994.1">
    <property type="nucleotide sequence ID" value="NC_005042.1"/>
</dbReference>
<dbReference type="RefSeq" id="WP_011125753.1">
    <property type="nucleotide sequence ID" value="NC_005042.1"/>
</dbReference>
<dbReference type="SMR" id="Q7VA64"/>
<dbReference type="STRING" id="167539.Pro_1603"/>
<dbReference type="EnsemblBacteria" id="AAQ00647">
    <property type="protein sequence ID" value="AAQ00647"/>
    <property type="gene ID" value="Pro_1603"/>
</dbReference>
<dbReference type="KEGG" id="pma:Pro_1603"/>
<dbReference type="PATRIC" id="fig|167539.5.peg.1694"/>
<dbReference type="eggNOG" id="COG0224">
    <property type="taxonomic scope" value="Bacteria"/>
</dbReference>
<dbReference type="HOGENOM" id="CLU_050669_0_0_3"/>
<dbReference type="OrthoDB" id="9812769at2"/>
<dbReference type="Proteomes" id="UP000001420">
    <property type="component" value="Chromosome"/>
</dbReference>
<dbReference type="GO" id="GO:0031676">
    <property type="term" value="C:plasma membrane-derived thylakoid membrane"/>
    <property type="evidence" value="ECO:0007669"/>
    <property type="project" value="UniProtKB-SubCell"/>
</dbReference>
<dbReference type="GO" id="GO:0045259">
    <property type="term" value="C:proton-transporting ATP synthase complex"/>
    <property type="evidence" value="ECO:0007669"/>
    <property type="project" value="UniProtKB-KW"/>
</dbReference>
<dbReference type="GO" id="GO:0005524">
    <property type="term" value="F:ATP binding"/>
    <property type="evidence" value="ECO:0007669"/>
    <property type="project" value="UniProtKB-UniRule"/>
</dbReference>
<dbReference type="GO" id="GO:0046933">
    <property type="term" value="F:proton-transporting ATP synthase activity, rotational mechanism"/>
    <property type="evidence" value="ECO:0007669"/>
    <property type="project" value="UniProtKB-UniRule"/>
</dbReference>
<dbReference type="CDD" id="cd12151">
    <property type="entry name" value="F1-ATPase_gamma"/>
    <property type="match status" value="1"/>
</dbReference>
<dbReference type="FunFam" id="3.40.1380.10:FF:000006">
    <property type="entry name" value="ATP synthase gamma chain"/>
    <property type="match status" value="1"/>
</dbReference>
<dbReference type="FunFam" id="1.10.287.80:FF:000003">
    <property type="entry name" value="ATP synthase gamma chain, chloroplastic"/>
    <property type="match status" value="1"/>
</dbReference>
<dbReference type="Gene3D" id="3.40.1380.10">
    <property type="match status" value="1"/>
</dbReference>
<dbReference type="Gene3D" id="1.10.287.80">
    <property type="entry name" value="ATP synthase, gamma subunit, helix hairpin domain"/>
    <property type="match status" value="2"/>
</dbReference>
<dbReference type="HAMAP" id="MF_00815">
    <property type="entry name" value="ATP_synth_gamma_bact"/>
    <property type="match status" value="1"/>
</dbReference>
<dbReference type="InterPro" id="IPR035968">
    <property type="entry name" value="ATP_synth_F1_ATPase_gsu"/>
</dbReference>
<dbReference type="InterPro" id="IPR000131">
    <property type="entry name" value="ATP_synth_F1_gsu"/>
</dbReference>
<dbReference type="NCBIfam" id="TIGR01146">
    <property type="entry name" value="ATPsyn_F1gamma"/>
    <property type="match status" value="1"/>
</dbReference>
<dbReference type="NCBIfam" id="NF004145">
    <property type="entry name" value="PRK05621.1-2"/>
    <property type="match status" value="1"/>
</dbReference>
<dbReference type="PANTHER" id="PTHR11693">
    <property type="entry name" value="ATP SYNTHASE GAMMA CHAIN"/>
    <property type="match status" value="1"/>
</dbReference>
<dbReference type="PANTHER" id="PTHR11693:SF41">
    <property type="entry name" value="ATP SYNTHASE GAMMA CHAIN, CHLOROPLASTIC"/>
    <property type="match status" value="1"/>
</dbReference>
<dbReference type="Pfam" id="PF00231">
    <property type="entry name" value="ATP-synt"/>
    <property type="match status" value="1"/>
</dbReference>
<dbReference type="PRINTS" id="PR00126">
    <property type="entry name" value="ATPASEGAMMA"/>
</dbReference>
<dbReference type="SUPFAM" id="SSF52943">
    <property type="entry name" value="ATP synthase (F1-ATPase), gamma subunit"/>
    <property type="match status" value="1"/>
</dbReference>
<protein>
    <recommendedName>
        <fullName evidence="1">ATP synthase gamma chain</fullName>
    </recommendedName>
    <alternativeName>
        <fullName evidence="1">ATP synthase F1 sector gamma subunit</fullName>
    </alternativeName>
    <alternativeName>
        <fullName evidence="1">F-ATPase gamma subunit</fullName>
    </alternativeName>
</protein>
<reference key="1">
    <citation type="journal article" date="2003" name="Proc. Natl. Acad. Sci. U.S.A.">
        <title>Genome sequence of the cyanobacterium Prochlorococcus marinus SS120, a nearly minimal oxyphototrophic genome.</title>
        <authorList>
            <person name="Dufresne A."/>
            <person name="Salanoubat M."/>
            <person name="Partensky F."/>
            <person name="Artiguenave F."/>
            <person name="Axmann I.M."/>
            <person name="Barbe V."/>
            <person name="Duprat S."/>
            <person name="Galperin M.Y."/>
            <person name="Koonin E.V."/>
            <person name="Le Gall F."/>
            <person name="Makarova K.S."/>
            <person name="Ostrowski M."/>
            <person name="Oztas S."/>
            <person name="Robert C."/>
            <person name="Rogozin I.B."/>
            <person name="Scanlan D.J."/>
            <person name="Tandeau de Marsac N."/>
            <person name="Weissenbach J."/>
            <person name="Wincker P."/>
            <person name="Wolf Y.I."/>
            <person name="Hess W.R."/>
        </authorList>
    </citation>
    <scope>NUCLEOTIDE SEQUENCE [LARGE SCALE GENOMIC DNA]</scope>
    <source>
        <strain>SARG / CCMP1375 / SS120</strain>
    </source>
</reference>
<name>ATPG_PROMA</name>
<comment type="function">
    <text evidence="1">Produces ATP from ADP in the presence of a proton gradient across the membrane. The gamma chain is believed to be important in regulating ATPase activity and the flow of protons through the CF(0) complex.</text>
</comment>
<comment type="subunit">
    <text evidence="1">F-type ATPases have 2 components, CF(1) - the catalytic core - and CF(0) - the membrane proton channel. CF(1) has five subunits: alpha(3), beta(3), gamma(1), delta(1), epsilon(1). CF(0) has three main subunits: a, b and c.</text>
</comment>
<comment type="subcellular location">
    <subcellularLocation>
        <location evidence="1">Cellular thylakoid membrane</location>
        <topology evidence="1">Peripheral membrane protein</topology>
    </subcellularLocation>
</comment>
<comment type="similarity">
    <text evidence="1">Belongs to the ATPase gamma chain family.</text>
</comment>
<sequence length="316" mass="35205">MANLKEIRDRIVSVKNTRKITEAMRLVAAAKVRRAQEQVLRSRPFADRLARVLENIQSRMKFEAADSPLLKARAVQKVTLLAVTGDRGLCGGYNTNVIKRTEQRYGELSSQGFEIDLVLIGRKAITYFQNRSSQYKIRASFQDLEQVPTSKDAEEATSEVLSEFLSESTDRVEIIYTKFISLVSCDPVVQTLLPLDPQGIAKEDDEIFRITTKGSRFVIEKDPAPANEEPVLPSDVVFEQSPDQLLNSLLPLYLQNQLLRALQEAAASELASRMTAMNNASDNAKELAKTLNLTYNKARQAAITQEILEVVGGASV</sequence>
<proteinExistence type="inferred from homology"/>
<gene>
    <name evidence="1" type="primary">atpG</name>
    <name evidence="1" type="synonym">atpC</name>
    <name type="ordered locus">Pro_1603</name>
</gene>
<organism>
    <name type="scientific">Prochlorococcus marinus (strain SARG / CCMP1375 / SS120)</name>
    <dbReference type="NCBI Taxonomy" id="167539"/>
    <lineage>
        <taxon>Bacteria</taxon>
        <taxon>Bacillati</taxon>
        <taxon>Cyanobacteriota</taxon>
        <taxon>Cyanophyceae</taxon>
        <taxon>Synechococcales</taxon>
        <taxon>Prochlorococcaceae</taxon>
        <taxon>Prochlorococcus</taxon>
    </lineage>
</organism>